<sequence length="324" mass="36377">MEVDEDIELQKHQEQQSRKLQRFSEDNTGLMRNWNNPSSRIIRVSRASGGKDRHSKVLTSKGLRDRRIRLSVATAIQFYDLQDRLGFDQPSKAVEWLINAASDSITDLPLLNTNFDHLDQNQNQTKSACSSGTSESSLLSLSRTEIRGKARERARERTAKDRDKDLQNAHSSFTQLLTGGFDQQPSNRNWTGGSDCFNPVQLQIPNSSSQEPMNHPFSFVPDYNFGISSSSSAINGGYSSRGTLQSNSQSLFLNNNNNITQRSSISSSSSSSSPMDSQSISFFMATPPPLDHHNHQLPETFDGRLYLYYGEGNRSSDDKAKERR</sequence>
<evidence type="ECO:0000255" key="1">
    <source>
        <dbReference type="PROSITE-ProRule" id="PRU00701"/>
    </source>
</evidence>
<evidence type="ECO:0000255" key="2">
    <source>
        <dbReference type="PROSITE-ProRule" id="PRU00702"/>
    </source>
</evidence>
<evidence type="ECO:0000256" key="3">
    <source>
        <dbReference type="SAM" id="MobiDB-lite"/>
    </source>
</evidence>
<evidence type="ECO:0000269" key="4">
    <source>
    </source>
</evidence>
<evidence type="ECO:0000269" key="5">
    <source>
    </source>
</evidence>
<evidence type="ECO:0000269" key="6">
    <source>
    </source>
</evidence>
<evidence type="ECO:0000269" key="7">
    <source>
    </source>
</evidence>
<evidence type="ECO:0000305" key="8"/>
<accession>Q9C758</accession>
<reference key="1">
    <citation type="journal article" date="2000" name="Nature">
        <title>Sequence and analysis of chromosome 1 of the plant Arabidopsis thaliana.</title>
        <authorList>
            <person name="Theologis A."/>
            <person name="Ecker J.R."/>
            <person name="Palm C.J."/>
            <person name="Federspiel N.A."/>
            <person name="Kaul S."/>
            <person name="White O."/>
            <person name="Alonso J."/>
            <person name="Altafi H."/>
            <person name="Araujo R."/>
            <person name="Bowman C.L."/>
            <person name="Brooks S.Y."/>
            <person name="Buehler E."/>
            <person name="Chan A."/>
            <person name="Chao Q."/>
            <person name="Chen H."/>
            <person name="Cheuk R.F."/>
            <person name="Chin C.W."/>
            <person name="Chung M.K."/>
            <person name="Conn L."/>
            <person name="Conway A.B."/>
            <person name="Conway A.R."/>
            <person name="Creasy T.H."/>
            <person name="Dewar K."/>
            <person name="Dunn P."/>
            <person name="Etgu P."/>
            <person name="Feldblyum T.V."/>
            <person name="Feng J.-D."/>
            <person name="Fong B."/>
            <person name="Fujii C.Y."/>
            <person name="Gill J.E."/>
            <person name="Goldsmith A.D."/>
            <person name="Haas B."/>
            <person name="Hansen N.F."/>
            <person name="Hughes B."/>
            <person name="Huizar L."/>
            <person name="Hunter J.L."/>
            <person name="Jenkins J."/>
            <person name="Johnson-Hopson C."/>
            <person name="Khan S."/>
            <person name="Khaykin E."/>
            <person name="Kim C.J."/>
            <person name="Koo H.L."/>
            <person name="Kremenetskaia I."/>
            <person name="Kurtz D.B."/>
            <person name="Kwan A."/>
            <person name="Lam B."/>
            <person name="Langin-Hooper S."/>
            <person name="Lee A."/>
            <person name="Lee J.M."/>
            <person name="Lenz C.A."/>
            <person name="Li J.H."/>
            <person name="Li Y.-P."/>
            <person name="Lin X."/>
            <person name="Liu S.X."/>
            <person name="Liu Z.A."/>
            <person name="Luros J.S."/>
            <person name="Maiti R."/>
            <person name="Marziali A."/>
            <person name="Militscher J."/>
            <person name="Miranda M."/>
            <person name="Nguyen M."/>
            <person name="Nierman W.C."/>
            <person name="Osborne B.I."/>
            <person name="Pai G."/>
            <person name="Peterson J."/>
            <person name="Pham P.K."/>
            <person name="Rizzo M."/>
            <person name="Rooney T."/>
            <person name="Rowley D."/>
            <person name="Sakano H."/>
            <person name="Salzberg S.L."/>
            <person name="Schwartz J.R."/>
            <person name="Shinn P."/>
            <person name="Southwick A.M."/>
            <person name="Sun H."/>
            <person name="Tallon L.J."/>
            <person name="Tambunga G."/>
            <person name="Toriumi M.J."/>
            <person name="Town C.D."/>
            <person name="Utterback T."/>
            <person name="Van Aken S."/>
            <person name="Vaysberg M."/>
            <person name="Vysotskaia V.S."/>
            <person name="Walker M."/>
            <person name="Wu D."/>
            <person name="Yu G."/>
            <person name="Fraser C.M."/>
            <person name="Venter J.C."/>
            <person name="Davis R.W."/>
        </authorList>
    </citation>
    <scope>NUCLEOTIDE SEQUENCE [LARGE SCALE GENOMIC DNA]</scope>
    <source>
        <strain>cv. Columbia</strain>
    </source>
</reference>
<reference key="2">
    <citation type="journal article" date="2017" name="Plant J.">
        <title>Araport11: a complete reannotation of the Arabidopsis thaliana reference genome.</title>
        <authorList>
            <person name="Cheng C.Y."/>
            <person name="Krishnakumar V."/>
            <person name="Chan A.P."/>
            <person name="Thibaud-Nissen F."/>
            <person name="Schobel S."/>
            <person name="Town C.D."/>
        </authorList>
    </citation>
    <scope>GENOME REANNOTATION</scope>
    <source>
        <strain>cv. Columbia</strain>
    </source>
</reference>
<reference key="3">
    <citation type="journal article" date="2003" name="Science">
        <title>Empirical analysis of transcriptional activity in the Arabidopsis genome.</title>
        <authorList>
            <person name="Yamada K."/>
            <person name="Lim J."/>
            <person name="Dale J.M."/>
            <person name="Chen H."/>
            <person name="Shinn P."/>
            <person name="Palm C.J."/>
            <person name="Southwick A.M."/>
            <person name="Wu H.C."/>
            <person name="Kim C.J."/>
            <person name="Nguyen M."/>
            <person name="Pham P.K."/>
            <person name="Cheuk R.F."/>
            <person name="Karlin-Newmann G."/>
            <person name="Liu S.X."/>
            <person name="Lam B."/>
            <person name="Sakano H."/>
            <person name="Wu T."/>
            <person name="Yu G."/>
            <person name="Miranda M."/>
            <person name="Quach H.L."/>
            <person name="Tripp M."/>
            <person name="Chang C.H."/>
            <person name="Lee J.M."/>
            <person name="Toriumi M.J."/>
            <person name="Chan M.M."/>
            <person name="Tang C.C."/>
            <person name="Onodera C.S."/>
            <person name="Deng J.M."/>
            <person name="Akiyama K."/>
            <person name="Ansari Y."/>
            <person name="Arakawa T."/>
            <person name="Banh J."/>
            <person name="Banno F."/>
            <person name="Bowser L."/>
            <person name="Brooks S.Y."/>
            <person name="Carninci P."/>
            <person name="Chao Q."/>
            <person name="Choy N."/>
            <person name="Enju A."/>
            <person name="Goldsmith A.D."/>
            <person name="Gurjal M."/>
            <person name="Hansen N.F."/>
            <person name="Hayashizaki Y."/>
            <person name="Johnson-Hopson C."/>
            <person name="Hsuan V.W."/>
            <person name="Iida K."/>
            <person name="Karnes M."/>
            <person name="Khan S."/>
            <person name="Koesema E."/>
            <person name="Ishida J."/>
            <person name="Jiang P.X."/>
            <person name="Jones T."/>
            <person name="Kawai J."/>
            <person name="Kamiya A."/>
            <person name="Meyers C."/>
            <person name="Nakajima M."/>
            <person name="Narusaka M."/>
            <person name="Seki M."/>
            <person name="Sakurai T."/>
            <person name="Satou M."/>
            <person name="Tamse R."/>
            <person name="Vaysberg M."/>
            <person name="Wallender E.K."/>
            <person name="Wong C."/>
            <person name="Yamamura Y."/>
            <person name="Yuan S."/>
            <person name="Shinozaki K."/>
            <person name="Davis R.W."/>
            <person name="Theologis A."/>
            <person name="Ecker J.R."/>
        </authorList>
    </citation>
    <scope>NUCLEOTIDE SEQUENCE [LARGE SCALE MRNA]</scope>
    <source>
        <strain>cv. Columbia</strain>
    </source>
</reference>
<reference key="4">
    <citation type="journal article" date="2007" name="Plant Cell">
        <title>Arabidopsis BRANCHED1 acts as an integrator of branching signals within axillary buds.</title>
        <authorList>
            <person name="Aguilar-Martinez J.A."/>
            <person name="Poza-Carrion C."/>
            <person name="Cubas P."/>
        </authorList>
    </citation>
    <scope>GENE FAMILY</scope>
    <scope>NOMENCLATURE</scope>
</reference>
<reference key="5">
    <citation type="journal article" date="2007" name="Plant Cell">
        <title>TCP transcription factors control the morphology of shoot lateral organs via negative regulation of the expression of boundary-specific genes in Arabidopsis.</title>
        <authorList>
            <person name="Koyama T."/>
            <person name="Furutani M."/>
            <person name="Tasaka M."/>
            <person name="Ohme-Takagi M."/>
        </authorList>
    </citation>
    <scope>FUNCTION</scope>
    <scope>TISSUE SPECIFICITY</scope>
</reference>
<reference key="6">
    <citation type="journal article" date="2008" name="EMBO J.">
        <title>ABAP1 is a novel plant Armadillo BTB protein involved in DNA replication and transcription.</title>
        <authorList>
            <person name="Masuda H.P."/>
            <person name="Cabral L.M."/>
            <person name="De Veylder L."/>
            <person name="Tanurdzic M."/>
            <person name="de Almeida Engler J."/>
            <person name="Geelen D."/>
            <person name="Inze D."/>
            <person name="Martienssen R.A."/>
            <person name="Ferreira P.C."/>
            <person name="Hemerly A.S."/>
        </authorList>
    </citation>
    <scope>FUNCTION</scope>
    <scope>IDENTIFICATION IN ABAP1-TCP24 COMPLEX</scope>
</reference>
<reference key="7">
    <citation type="journal article" date="2014" name="J. Genet. Genomics">
        <title>SPOROCYTELESS is a novel embryophyte-specific transcription repressor that interacts with TPL and TCP proteins in Arabidopsis.</title>
        <authorList>
            <person name="Chen G.H."/>
            <person name="Sun J.Y."/>
            <person name="Liu M."/>
            <person name="Liu J."/>
            <person name="Yang W.C."/>
        </authorList>
    </citation>
    <scope>INTERACTION WITH SPL</scope>
</reference>
<reference key="8">
    <citation type="journal article" date="2015" name="Cell Res.">
        <title>The molecular mechanism of sporocyteless/nozzle in controlling Arabidopsis ovule development.</title>
        <authorList>
            <person name="Wei B."/>
            <person name="Zhang J."/>
            <person name="Pang C."/>
            <person name="Yu H."/>
            <person name="Guo D."/>
            <person name="Jiang H."/>
            <person name="Ding M."/>
            <person name="Chen Z."/>
            <person name="Tao Q."/>
            <person name="Gu H."/>
            <person name="Qu L.J."/>
            <person name="Qin G."/>
        </authorList>
    </citation>
    <scope>FUNCTION</scope>
    <scope>INTERACTION WITH SPL</scope>
    <scope>DEVELOPMENTAL STAGE</scope>
</reference>
<gene>
    <name type="primary">TCP24</name>
    <name type="ordered locus">At1g30210</name>
    <name type="ORF">F12P21.11</name>
</gene>
<keyword id="KW-0217">Developmental protein</keyword>
<keyword id="KW-0238">DNA-binding</keyword>
<keyword id="KW-0539">Nucleus</keyword>
<keyword id="KW-1185">Reference proteome</keyword>
<keyword id="KW-0804">Transcription</keyword>
<keyword id="KW-0805">Transcription regulation</keyword>
<feature type="chain" id="PRO_0000330798" description="Transcription factor TCP24">
    <location>
        <begin position="1"/>
        <end position="324"/>
    </location>
</feature>
<feature type="domain" description="TCP" evidence="1">
    <location>
        <begin position="50"/>
        <end position="108"/>
    </location>
</feature>
<feature type="domain" description="R" evidence="2">
    <location>
        <begin position="144"/>
        <end position="162"/>
    </location>
</feature>
<feature type="region of interest" description="Disordered" evidence="3">
    <location>
        <begin position="122"/>
        <end position="215"/>
    </location>
</feature>
<feature type="region of interest" description="Disordered" evidence="3">
    <location>
        <begin position="261"/>
        <end position="297"/>
    </location>
</feature>
<feature type="compositionally biased region" description="Low complexity" evidence="3">
    <location>
        <begin position="127"/>
        <end position="142"/>
    </location>
</feature>
<feature type="compositionally biased region" description="Basic and acidic residues" evidence="3">
    <location>
        <begin position="144"/>
        <end position="167"/>
    </location>
</feature>
<feature type="compositionally biased region" description="Polar residues" evidence="3">
    <location>
        <begin position="168"/>
        <end position="192"/>
    </location>
</feature>
<feature type="compositionally biased region" description="Polar residues" evidence="3">
    <location>
        <begin position="200"/>
        <end position="212"/>
    </location>
</feature>
<feature type="compositionally biased region" description="Low complexity" evidence="3">
    <location>
        <begin position="261"/>
        <end position="281"/>
    </location>
</feature>
<comment type="function">
    <text evidence="4 5 6">Plays a pivotal role in the control of morphogenesis of shoot organs by negatively regulating the expression of boundary-specific genes such as CUC genes, probably through the induction of miRNA (e.g. miR164). In association with ABAP1, exerts a negative role in cell proliferation in leaves, possibly by inhibiting mitotic DNA replication. Participates in ovule development (PubMed:25378179).</text>
</comment>
<comment type="subunit">
    <text evidence="5 6 7">Forms a heterodimeric complex with ABAP1 (PubMed:18818695). Interacts with SPL (PubMed:25378179, PubMed:25527103).</text>
</comment>
<comment type="interaction">
    <interactant intactId="EBI-8079833">
        <id>Q9C758</id>
    </interactant>
    <interactant intactId="EBI-541722">
        <id>B7U179</id>
        <label>ABAP1</label>
    </interactant>
    <organismsDiffer>false</organismsDiffer>
    <experiments>4</experiments>
</comment>
<comment type="subcellular location">
    <subcellularLocation>
        <location evidence="8">Nucleus</location>
    </subcellularLocation>
</comment>
<comment type="tissue specificity">
    <text evidence="4">Expressed in cotyledons, particularly in the vascular region, in leaves, roots, stems, buds, flowers and siliques.</text>
</comment>
<comment type="developmental stage">
    <text evidence="6">Expressed during ovule development (PubMed:25378179).</text>
</comment>
<name>TCP24_ARATH</name>
<dbReference type="EMBL" id="AC073506">
    <property type="protein sequence ID" value="AAG50562.1"/>
    <property type="molecule type" value="Genomic_DNA"/>
</dbReference>
<dbReference type="EMBL" id="CP002684">
    <property type="protein sequence ID" value="AEE31192.1"/>
    <property type="molecule type" value="Genomic_DNA"/>
</dbReference>
<dbReference type="EMBL" id="CP002684">
    <property type="protein sequence ID" value="AEE31193.1"/>
    <property type="molecule type" value="Genomic_DNA"/>
</dbReference>
<dbReference type="EMBL" id="AY035008">
    <property type="protein sequence ID" value="AAK59513.1"/>
    <property type="molecule type" value="mRNA"/>
</dbReference>
<dbReference type="EMBL" id="AY057672">
    <property type="protein sequence ID" value="AAL15303.1"/>
    <property type="molecule type" value="mRNA"/>
</dbReference>
<dbReference type="EMBL" id="AY113898">
    <property type="protein sequence ID" value="AAM44946.1"/>
    <property type="molecule type" value="mRNA"/>
</dbReference>
<dbReference type="PIR" id="C86426">
    <property type="entry name" value="C86426"/>
</dbReference>
<dbReference type="RefSeq" id="NP_564351.1">
    <property type="nucleotide sequence ID" value="NM_102760.3"/>
</dbReference>
<dbReference type="RefSeq" id="NP_849730.1">
    <property type="nucleotide sequence ID" value="NM_179399.3"/>
</dbReference>
<dbReference type="SMR" id="Q9C758"/>
<dbReference type="BioGRID" id="25136">
    <property type="interactions" value="18"/>
</dbReference>
<dbReference type="FunCoup" id="Q9C758">
    <property type="interactions" value="273"/>
</dbReference>
<dbReference type="IntAct" id="Q9C758">
    <property type="interactions" value="6"/>
</dbReference>
<dbReference type="MINT" id="Q9C758"/>
<dbReference type="STRING" id="3702.Q9C758"/>
<dbReference type="PaxDb" id="3702-AT1G30210.1"/>
<dbReference type="ProteomicsDB" id="234149"/>
<dbReference type="EnsemblPlants" id="AT1G30210.1">
    <property type="protein sequence ID" value="AT1G30210.1"/>
    <property type="gene ID" value="AT1G30210"/>
</dbReference>
<dbReference type="EnsemblPlants" id="AT1G30210.2">
    <property type="protein sequence ID" value="AT1G30210.2"/>
    <property type="gene ID" value="AT1G30210"/>
</dbReference>
<dbReference type="GeneID" id="839901"/>
<dbReference type="Gramene" id="AT1G30210.1">
    <property type="protein sequence ID" value="AT1G30210.1"/>
    <property type="gene ID" value="AT1G30210"/>
</dbReference>
<dbReference type="Gramene" id="AT1G30210.2">
    <property type="protein sequence ID" value="AT1G30210.2"/>
    <property type="gene ID" value="AT1G30210"/>
</dbReference>
<dbReference type="KEGG" id="ath:AT1G30210"/>
<dbReference type="Araport" id="AT1G30210"/>
<dbReference type="TAIR" id="AT1G30210">
    <property type="gene designation" value="TCP24"/>
</dbReference>
<dbReference type="eggNOG" id="ENOG502QQFU">
    <property type="taxonomic scope" value="Eukaryota"/>
</dbReference>
<dbReference type="HOGENOM" id="CLU_036572_0_0_1"/>
<dbReference type="InParanoid" id="Q9C758"/>
<dbReference type="OMA" id="RNWNNPS"/>
<dbReference type="OrthoDB" id="688758at2759"/>
<dbReference type="PhylomeDB" id="Q9C758"/>
<dbReference type="PRO" id="PR:Q9C758"/>
<dbReference type="Proteomes" id="UP000006548">
    <property type="component" value="Chromosome 1"/>
</dbReference>
<dbReference type="ExpressionAtlas" id="Q9C758">
    <property type="expression patterns" value="baseline and differential"/>
</dbReference>
<dbReference type="GO" id="GO:0005634">
    <property type="term" value="C:nucleus"/>
    <property type="evidence" value="ECO:0007669"/>
    <property type="project" value="UniProtKB-SubCell"/>
</dbReference>
<dbReference type="GO" id="GO:0003677">
    <property type="term" value="F:DNA binding"/>
    <property type="evidence" value="ECO:0000353"/>
    <property type="project" value="TAIR"/>
</dbReference>
<dbReference type="GO" id="GO:0003700">
    <property type="term" value="F:DNA-binding transcription factor activity"/>
    <property type="evidence" value="ECO:0000250"/>
    <property type="project" value="TAIR"/>
</dbReference>
<dbReference type="GO" id="GO:0048366">
    <property type="term" value="P:leaf development"/>
    <property type="evidence" value="ECO:0000315"/>
    <property type="project" value="TAIR"/>
</dbReference>
<dbReference type="GO" id="GO:0008285">
    <property type="term" value="P:negative regulation of cell population proliferation"/>
    <property type="evidence" value="ECO:0000316"/>
    <property type="project" value="UniProtKB"/>
</dbReference>
<dbReference type="GO" id="GO:0006355">
    <property type="term" value="P:regulation of DNA-templated transcription"/>
    <property type="evidence" value="ECO:0000304"/>
    <property type="project" value="TAIR"/>
</dbReference>
<dbReference type="InterPro" id="IPR017888">
    <property type="entry name" value="CYC/TB1_R_domain"/>
</dbReference>
<dbReference type="InterPro" id="IPR017887">
    <property type="entry name" value="TF_TCP_subgr"/>
</dbReference>
<dbReference type="InterPro" id="IPR005333">
    <property type="entry name" value="Transcription_factor_TCP"/>
</dbReference>
<dbReference type="PANTHER" id="PTHR31072:SF93">
    <property type="entry name" value="TRANSCRIPTION FACTOR TCP24"/>
    <property type="match status" value="1"/>
</dbReference>
<dbReference type="PANTHER" id="PTHR31072">
    <property type="entry name" value="TRANSCRIPTION FACTOR TCP4-RELATED"/>
    <property type="match status" value="1"/>
</dbReference>
<dbReference type="Pfam" id="PF03634">
    <property type="entry name" value="TCP"/>
    <property type="match status" value="1"/>
</dbReference>
<dbReference type="PROSITE" id="PS51370">
    <property type="entry name" value="R"/>
    <property type="match status" value="1"/>
</dbReference>
<dbReference type="PROSITE" id="PS51369">
    <property type="entry name" value="TCP"/>
    <property type="match status" value="1"/>
</dbReference>
<protein>
    <recommendedName>
        <fullName>Transcription factor TCP24</fullName>
    </recommendedName>
</protein>
<organism>
    <name type="scientific">Arabidopsis thaliana</name>
    <name type="common">Mouse-ear cress</name>
    <dbReference type="NCBI Taxonomy" id="3702"/>
    <lineage>
        <taxon>Eukaryota</taxon>
        <taxon>Viridiplantae</taxon>
        <taxon>Streptophyta</taxon>
        <taxon>Embryophyta</taxon>
        <taxon>Tracheophyta</taxon>
        <taxon>Spermatophyta</taxon>
        <taxon>Magnoliopsida</taxon>
        <taxon>eudicotyledons</taxon>
        <taxon>Gunneridae</taxon>
        <taxon>Pentapetalae</taxon>
        <taxon>rosids</taxon>
        <taxon>malvids</taxon>
        <taxon>Brassicales</taxon>
        <taxon>Brassicaceae</taxon>
        <taxon>Camelineae</taxon>
        <taxon>Arabidopsis</taxon>
    </lineage>
</organism>
<proteinExistence type="evidence at protein level"/>